<protein>
    <recommendedName>
        <fullName evidence="1">4-hydroxy-3-methylbut-2-enyl diphosphate reductase</fullName>
        <shortName evidence="1">HMBPP reductase</shortName>
        <ecNumber evidence="1">1.17.7.4</ecNumber>
    </recommendedName>
</protein>
<organism>
    <name type="scientific">Clostridium perfringens (strain SM101 / Type A)</name>
    <dbReference type="NCBI Taxonomy" id="289380"/>
    <lineage>
        <taxon>Bacteria</taxon>
        <taxon>Bacillati</taxon>
        <taxon>Bacillota</taxon>
        <taxon>Clostridia</taxon>
        <taxon>Eubacteriales</taxon>
        <taxon>Clostridiaceae</taxon>
        <taxon>Clostridium</taxon>
    </lineage>
</organism>
<evidence type="ECO:0000255" key="1">
    <source>
        <dbReference type="HAMAP-Rule" id="MF_00191"/>
    </source>
</evidence>
<gene>
    <name evidence="1" type="primary">ispH</name>
    <name type="ordered locus">CPR_1152</name>
</gene>
<comment type="function">
    <text evidence="1">Catalyzes the conversion of 1-hydroxy-2-methyl-2-(E)-butenyl 4-diphosphate (HMBPP) into a mixture of isopentenyl diphosphate (IPP) and dimethylallyl diphosphate (DMAPP). Acts in the terminal step of the DOXP/MEP pathway for isoprenoid precursor biosynthesis.</text>
</comment>
<comment type="catalytic activity">
    <reaction evidence="1">
        <text>isopentenyl diphosphate + 2 oxidized [2Fe-2S]-[ferredoxin] + H2O = (2E)-4-hydroxy-3-methylbut-2-enyl diphosphate + 2 reduced [2Fe-2S]-[ferredoxin] + 2 H(+)</text>
        <dbReference type="Rhea" id="RHEA:24488"/>
        <dbReference type="Rhea" id="RHEA-COMP:10000"/>
        <dbReference type="Rhea" id="RHEA-COMP:10001"/>
        <dbReference type="ChEBI" id="CHEBI:15377"/>
        <dbReference type="ChEBI" id="CHEBI:15378"/>
        <dbReference type="ChEBI" id="CHEBI:33737"/>
        <dbReference type="ChEBI" id="CHEBI:33738"/>
        <dbReference type="ChEBI" id="CHEBI:128753"/>
        <dbReference type="ChEBI" id="CHEBI:128769"/>
        <dbReference type="EC" id="1.17.7.4"/>
    </reaction>
</comment>
<comment type="catalytic activity">
    <reaction evidence="1">
        <text>dimethylallyl diphosphate + 2 oxidized [2Fe-2S]-[ferredoxin] + H2O = (2E)-4-hydroxy-3-methylbut-2-enyl diphosphate + 2 reduced [2Fe-2S]-[ferredoxin] + 2 H(+)</text>
        <dbReference type="Rhea" id="RHEA:24825"/>
        <dbReference type="Rhea" id="RHEA-COMP:10000"/>
        <dbReference type="Rhea" id="RHEA-COMP:10001"/>
        <dbReference type="ChEBI" id="CHEBI:15377"/>
        <dbReference type="ChEBI" id="CHEBI:15378"/>
        <dbReference type="ChEBI" id="CHEBI:33737"/>
        <dbReference type="ChEBI" id="CHEBI:33738"/>
        <dbReference type="ChEBI" id="CHEBI:57623"/>
        <dbReference type="ChEBI" id="CHEBI:128753"/>
        <dbReference type="EC" id="1.17.7.4"/>
    </reaction>
</comment>
<comment type="cofactor">
    <cofactor evidence="1">
        <name>[4Fe-4S] cluster</name>
        <dbReference type="ChEBI" id="CHEBI:49883"/>
    </cofactor>
    <text evidence="1">Binds 1 [4Fe-4S] cluster per subunit.</text>
</comment>
<comment type="pathway">
    <text evidence="1">Isoprenoid biosynthesis; dimethylallyl diphosphate biosynthesis; dimethylallyl diphosphate from (2E)-4-hydroxy-3-methylbutenyl diphosphate: step 1/1.</text>
</comment>
<comment type="pathway">
    <text evidence="1">Isoprenoid biosynthesis; isopentenyl diphosphate biosynthesis via DXP pathway; isopentenyl diphosphate from 1-deoxy-D-xylulose 5-phosphate: step 6/6.</text>
</comment>
<comment type="similarity">
    <text evidence="1">Belongs to the IspH family.</text>
</comment>
<reference key="1">
    <citation type="journal article" date="2006" name="Genome Res.">
        <title>Skewed genomic variability in strains of the toxigenic bacterial pathogen, Clostridium perfringens.</title>
        <authorList>
            <person name="Myers G.S.A."/>
            <person name="Rasko D.A."/>
            <person name="Cheung J.K."/>
            <person name="Ravel J."/>
            <person name="Seshadri R."/>
            <person name="DeBoy R.T."/>
            <person name="Ren Q."/>
            <person name="Varga J."/>
            <person name="Awad M.M."/>
            <person name="Brinkac L.M."/>
            <person name="Daugherty S.C."/>
            <person name="Haft D.H."/>
            <person name="Dodson R.J."/>
            <person name="Madupu R."/>
            <person name="Nelson W.C."/>
            <person name="Rosovitz M.J."/>
            <person name="Sullivan S.A."/>
            <person name="Khouri H."/>
            <person name="Dimitrov G.I."/>
            <person name="Watkins K.L."/>
            <person name="Mulligan S."/>
            <person name="Benton J."/>
            <person name="Radune D."/>
            <person name="Fisher D.J."/>
            <person name="Atkins H.S."/>
            <person name="Hiscox T."/>
            <person name="Jost B.H."/>
            <person name="Billington S.J."/>
            <person name="Songer J.G."/>
            <person name="McClane B.A."/>
            <person name="Titball R.W."/>
            <person name="Rood J.I."/>
            <person name="Melville S.B."/>
            <person name="Paulsen I.T."/>
        </authorList>
    </citation>
    <scope>NUCLEOTIDE SEQUENCE [LARGE SCALE GENOMIC DNA]</scope>
    <source>
        <strain>SM101 / Type A</strain>
    </source>
</reference>
<proteinExistence type="inferred from homology"/>
<feature type="chain" id="PRO_1000021107" description="4-hydroxy-3-methylbut-2-enyl diphosphate reductase">
    <location>
        <begin position="1"/>
        <end position="282"/>
    </location>
</feature>
<feature type="active site" description="Proton donor" evidence="1">
    <location>
        <position position="130"/>
    </location>
</feature>
<feature type="binding site" evidence="1">
    <location>
        <position position="14"/>
    </location>
    <ligand>
        <name>[4Fe-4S] cluster</name>
        <dbReference type="ChEBI" id="CHEBI:49883"/>
    </ligand>
</feature>
<feature type="binding site" evidence="1">
    <location>
        <position position="43"/>
    </location>
    <ligand>
        <name>(2E)-4-hydroxy-3-methylbut-2-enyl diphosphate</name>
        <dbReference type="ChEBI" id="CHEBI:128753"/>
    </ligand>
</feature>
<feature type="binding site" evidence="1">
    <location>
        <position position="43"/>
    </location>
    <ligand>
        <name>dimethylallyl diphosphate</name>
        <dbReference type="ChEBI" id="CHEBI:57623"/>
    </ligand>
</feature>
<feature type="binding site" evidence="1">
    <location>
        <position position="43"/>
    </location>
    <ligand>
        <name>isopentenyl diphosphate</name>
        <dbReference type="ChEBI" id="CHEBI:128769"/>
    </ligand>
</feature>
<feature type="binding site" evidence="1">
    <location>
        <position position="78"/>
    </location>
    <ligand>
        <name>(2E)-4-hydroxy-3-methylbut-2-enyl diphosphate</name>
        <dbReference type="ChEBI" id="CHEBI:128753"/>
    </ligand>
</feature>
<feature type="binding site" evidence="1">
    <location>
        <position position="78"/>
    </location>
    <ligand>
        <name>dimethylallyl diphosphate</name>
        <dbReference type="ChEBI" id="CHEBI:57623"/>
    </ligand>
</feature>
<feature type="binding site" evidence="1">
    <location>
        <position position="78"/>
    </location>
    <ligand>
        <name>isopentenyl diphosphate</name>
        <dbReference type="ChEBI" id="CHEBI:128769"/>
    </ligand>
</feature>
<feature type="binding site" evidence="1">
    <location>
        <position position="100"/>
    </location>
    <ligand>
        <name>[4Fe-4S] cluster</name>
        <dbReference type="ChEBI" id="CHEBI:49883"/>
    </ligand>
</feature>
<feature type="binding site" evidence="1">
    <location>
        <position position="128"/>
    </location>
    <ligand>
        <name>(2E)-4-hydroxy-3-methylbut-2-enyl diphosphate</name>
        <dbReference type="ChEBI" id="CHEBI:128753"/>
    </ligand>
</feature>
<feature type="binding site" evidence="1">
    <location>
        <position position="128"/>
    </location>
    <ligand>
        <name>dimethylallyl diphosphate</name>
        <dbReference type="ChEBI" id="CHEBI:57623"/>
    </ligand>
</feature>
<feature type="binding site" evidence="1">
    <location>
        <position position="128"/>
    </location>
    <ligand>
        <name>isopentenyl diphosphate</name>
        <dbReference type="ChEBI" id="CHEBI:128769"/>
    </ligand>
</feature>
<feature type="binding site" evidence="1">
    <location>
        <position position="164"/>
    </location>
    <ligand>
        <name>(2E)-4-hydroxy-3-methylbut-2-enyl diphosphate</name>
        <dbReference type="ChEBI" id="CHEBI:128753"/>
    </ligand>
</feature>
<feature type="binding site" evidence="1">
    <location>
        <position position="192"/>
    </location>
    <ligand>
        <name>[4Fe-4S] cluster</name>
        <dbReference type="ChEBI" id="CHEBI:49883"/>
    </ligand>
</feature>
<feature type="binding site" evidence="1">
    <location>
        <position position="220"/>
    </location>
    <ligand>
        <name>(2E)-4-hydroxy-3-methylbut-2-enyl diphosphate</name>
        <dbReference type="ChEBI" id="CHEBI:128753"/>
    </ligand>
</feature>
<feature type="binding site" evidence="1">
    <location>
        <position position="220"/>
    </location>
    <ligand>
        <name>dimethylallyl diphosphate</name>
        <dbReference type="ChEBI" id="CHEBI:57623"/>
    </ligand>
</feature>
<feature type="binding site" evidence="1">
    <location>
        <position position="220"/>
    </location>
    <ligand>
        <name>isopentenyl diphosphate</name>
        <dbReference type="ChEBI" id="CHEBI:128769"/>
    </ligand>
</feature>
<feature type="binding site" evidence="1">
    <location>
        <position position="221"/>
    </location>
    <ligand>
        <name>(2E)-4-hydroxy-3-methylbut-2-enyl diphosphate</name>
        <dbReference type="ChEBI" id="CHEBI:128753"/>
    </ligand>
</feature>
<feature type="binding site" evidence="1">
    <location>
        <position position="221"/>
    </location>
    <ligand>
        <name>dimethylallyl diphosphate</name>
        <dbReference type="ChEBI" id="CHEBI:57623"/>
    </ligand>
</feature>
<feature type="binding site" evidence="1">
    <location>
        <position position="221"/>
    </location>
    <ligand>
        <name>isopentenyl diphosphate</name>
        <dbReference type="ChEBI" id="CHEBI:128769"/>
    </ligand>
</feature>
<feature type="binding site" evidence="1">
    <location>
        <position position="222"/>
    </location>
    <ligand>
        <name>(2E)-4-hydroxy-3-methylbut-2-enyl diphosphate</name>
        <dbReference type="ChEBI" id="CHEBI:128753"/>
    </ligand>
</feature>
<feature type="binding site" evidence="1">
    <location>
        <position position="222"/>
    </location>
    <ligand>
        <name>dimethylallyl diphosphate</name>
        <dbReference type="ChEBI" id="CHEBI:57623"/>
    </ligand>
</feature>
<feature type="binding site" evidence="1">
    <location>
        <position position="222"/>
    </location>
    <ligand>
        <name>isopentenyl diphosphate</name>
        <dbReference type="ChEBI" id="CHEBI:128769"/>
    </ligand>
</feature>
<feature type="binding site" evidence="1">
    <location>
        <position position="266"/>
    </location>
    <ligand>
        <name>(2E)-4-hydroxy-3-methylbut-2-enyl diphosphate</name>
        <dbReference type="ChEBI" id="CHEBI:128753"/>
    </ligand>
</feature>
<feature type="binding site" evidence="1">
    <location>
        <position position="266"/>
    </location>
    <ligand>
        <name>dimethylallyl diphosphate</name>
        <dbReference type="ChEBI" id="CHEBI:57623"/>
    </ligand>
</feature>
<feature type="binding site" evidence="1">
    <location>
        <position position="266"/>
    </location>
    <ligand>
        <name>isopentenyl diphosphate</name>
        <dbReference type="ChEBI" id="CHEBI:128769"/>
    </ligand>
</feature>
<name>ISPH_CLOPS</name>
<accession>Q0STT3</accession>
<sequence>MERNVILAKNAGFCFGVKRAVDEAIKYQKEFGKKIYTLGPLIHNNDVVNYLEDNDIFAIELSDTNSLNKGDVVLIRSHGVKESVIKDLTDKGLIVKNATCPYVTNIQLKVKKCYEQGYKIIIVGDENHPEVIGINGWCNDSAIITNGKTELENIPAKVCVVSQTTEKKETWNKVLNEIVKESKEIVAFNTICSATDVRQKSVQELSKEADLVFVIGGKNSSNTTKLYEICKKECPKSYHIENVKELDESLLEDESVKTIGITAGASTPDWIINEVISKIKEL</sequence>
<dbReference type="EC" id="1.17.7.4" evidence="1"/>
<dbReference type="EMBL" id="CP000312">
    <property type="protein sequence ID" value="ABG85948.1"/>
    <property type="molecule type" value="Genomic_DNA"/>
</dbReference>
<dbReference type="RefSeq" id="WP_011592158.1">
    <property type="nucleotide sequence ID" value="NC_008262.1"/>
</dbReference>
<dbReference type="SMR" id="Q0STT3"/>
<dbReference type="KEGG" id="cpr:CPR_1152"/>
<dbReference type="UniPathway" id="UPA00056">
    <property type="reaction ID" value="UER00097"/>
</dbReference>
<dbReference type="UniPathway" id="UPA00059">
    <property type="reaction ID" value="UER00105"/>
</dbReference>
<dbReference type="Proteomes" id="UP000001824">
    <property type="component" value="Chromosome"/>
</dbReference>
<dbReference type="GO" id="GO:0051539">
    <property type="term" value="F:4 iron, 4 sulfur cluster binding"/>
    <property type="evidence" value="ECO:0007669"/>
    <property type="project" value="UniProtKB-UniRule"/>
</dbReference>
<dbReference type="GO" id="GO:0051745">
    <property type="term" value="F:4-hydroxy-3-methylbut-2-enyl diphosphate reductase activity"/>
    <property type="evidence" value="ECO:0007669"/>
    <property type="project" value="UniProtKB-UniRule"/>
</dbReference>
<dbReference type="GO" id="GO:0046872">
    <property type="term" value="F:metal ion binding"/>
    <property type="evidence" value="ECO:0007669"/>
    <property type="project" value="UniProtKB-KW"/>
</dbReference>
<dbReference type="GO" id="GO:0050992">
    <property type="term" value="P:dimethylallyl diphosphate biosynthetic process"/>
    <property type="evidence" value="ECO:0007669"/>
    <property type="project" value="UniProtKB-UniRule"/>
</dbReference>
<dbReference type="GO" id="GO:0019288">
    <property type="term" value="P:isopentenyl diphosphate biosynthetic process, methylerythritol 4-phosphate pathway"/>
    <property type="evidence" value="ECO:0007669"/>
    <property type="project" value="UniProtKB-UniRule"/>
</dbReference>
<dbReference type="GO" id="GO:0016114">
    <property type="term" value="P:terpenoid biosynthetic process"/>
    <property type="evidence" value="ECO:0007669"/>
    <property type="project" value="UniProtKB-UniRule"/>
</dbReference>
<dbReference type="CDD" id="cd13944">
    <property type="entry name" value="lytB_ispH"/>
    <property type="match status" value="1"/>
</dbReference>
<dbReference type="Gene3D" id="3.40.50.11270">
    <property type="match status" value="1"/>
</dbReference>
<dbReference type="Gene3D" id="3.40.1010.20">
    <property type="entry name" value="4-hydroxy-3-methylbut-2-enyl diphosphate reductase, catalytic domain"/>
    <property type="match status" value="2"/>
</dbReference>
<dbReference type="HAMAP" id="MF_00191">
    <property type="entry name" value="IspH"/>
    <property type="match status" value="1"/>
</dbReference>
<dbReference type="InterPro" id="IPR003451">
    <property type="entry name" value="LytB/IspH"/>
</dbReference>
<dbReference type="NCBIfam" id="TIGR00216">
    <property type="entry name" value="ispH_lytB"/>
    <property type="match status" value="1"/>
</dbReference>
<dbReference type="NCBIfam" id="NF002187">
    <property type="entry name" value="PRK01045.1-1"/>
    <property type="match status" value="1"/>
</dbReference>
<dbReference type="NCBIfam" id="NF009024">
    <property type="entry name" value="PRK12360.1"/>
    <property type="match status" value="1"/>
</dbReference>
<dbReference type="PANTHER" id="PTHR30426">
    <property type="entry name" value="4-HYDROXY-3-METHYLBUT-2-ENYL DIPHOSPHATE REDUCTASE"/>
    <property type="match status" value="1"/>
</dbReference>
<dbReference type="PANTHER" id="PTHR30426:SF0">
    <property type="entry name" value="4-HYDROXY-3-METHYLBUT-2-ENYL DIPHOSPHATE REDUCTASE"/>
    <property type="match status" value="1"/>
</dbReference>
<dbReference type="Pfam" id="PF02401">
    <property type="entry name" value="LYTB"/>
    <property type="match status" value="1"/>
</dbReference>
<keyword id="KW-0004">4Fe-4S</keyword>
<keyword id="KW-0408">Iron</keyword>
<keyword id="KW-0411">Iron-sulfur</keyword>
<keyword id="KW-0414">Isoprene biosynthesis</keyword>
<keyword id="KW-0479">Metal-binding</keyword>
<keyword id="KW-0560">Oxidoreductase</keyword>